<evidence type="ECO:0000255" key="1">
    <source>
        <dbReference type="HAMAP-Rule" id="MF_00382"/>
    </source>
</evidence>
<evidence type="ECO:0000305" key="2"/>
<reference key="1">
    <citation type="journal article" date="2006" name="J. Bacteriol.">
        <title>Comparative genomic analysis of three strains of Ehrlichia ruminantium reveals an active process of genome size plasticity.</title>
        <authorList>
            <person name="Frutos R."/>
            <person name="Viari A."/>
            <person name="Ferraz C."/>
            <person name="Morgat A."/>
            <person name="Eychenie S."/>
            <person name="Kandassamy Y."/>
            <person name="Chantal I."/>
            <person name="Bensaid A."/>
            <person name="Coissac E."/>
            <person name="Vachiery N."/>
            <person name="Demaille J."/>
            <person name="Martinez D."/>
        </authorList>
    </citation>
    <scope>NUCLEOTIDE SEQUENCE [LARGE SCALE GENOMIC DNA]</scope>
    <source>
        <strain>Gardel</strain>
    </source>
</reference>
<proteinExistence type="inferred from homology"/>
<keyword id="KW-0687">Ribonucleoprotein</keyword>
<keyword id="KW-0689">Ribosomal protein</keyword>
<keyword id="KW-0694">RNA-binding</keyword>
<keyword id="KW-0699">rRNA-binding</keyword>
<accession>Q5FH69</accession>
<name>RL20_EHRRG</name>
<dbReference type="EMBL" id="CR925677">
    <property type="protein sequence ID" value="CAI27581.1"/>
    <property type="molecule type" value="Genomic_DNA"/>
</dbReference>
<dbReference type="RefSeq" id="WP_011154821.1">
    <property type="nucleotide sequence ID" value="NC_006831.1"/>
</dbReference>
<dbReference type="SMR" id="Q5FH69"/>
<dbReference type="GeneID" id="33057533"/>
<dbReference type="KEGG" id="erg:ERGA_CDS_01290"/>
<dbReference type="HOGENOM" id="CLU_123265_0_1_5"/>
<dbReference type="OrthoDB" id="9808966at2"/>
<dbReference type="Proteomes" id="UP000000533">
    <property type="component" value="Chromosome"/>
</dbReference>
<dbReference type="GO" id="GO:1990904">
    <property type="term" value="C:ribonucleoprotein complex"/>
    <property type="evidence" value="ECO:0007669"/>
    <property type="project" value="UniProtKB-KW"/>
</dbReference>
<dbReference type="GO" id="GO:0005840">
    <property type="term" value="C:ribosome"/>
    <property type="evidence" value="ECO:0007669"/>
    <property type="project" value="UniProtKB-KW"/>
</dbReference>
<dbReference type="GO" id="GO:0019843">
    <property type="term" value="F:rRNA binding"/>
    <property type="evidence" value="ECO:0007669"/>
    <property type="project" value="UniProtKB-UniRule"/>
</dbReference>
<dbReference type="GO" id="GO:0003735">
    <property type="term" value="F:structural constituent of ribosome"/>
    <property type="evidence" value="ECO:0007669"/>
    <property type="project" value="InterPro"/>
</dbReference>
<dbReference type="GO" id="GO:0000027">
    <property type="term" value="P:ribosomal large subunit assembly"/>
    <property type="evidence" value="ECO:0007669"/>
    <property type="project" value="UniProtKB-UniRule"/>
</dbReference>
<dbReference type="GO" id="GO:0006412">
    <property type="term" value="P:translation"/>
    <property type="evidence" value="ECO:0007669"/>
    <property type="project" value="InterPro"/>
</dbReference>
<dbReference type="CDD" id="cd07026">
    <property type="entry name" value="Ribosomal_L20"/>
    <property type="match status" value="1"/>
</dbReference>
<dbReference type="FunFam" id="1.10.1900.20:FF:000001">
    <property type="entry name" value="50S ribosomal protein L20"/>
    <property type="match status" value="1"/>
</dbReference>
<dbReference type="Gene3D" id="6.10.160.10">
    <property type="match status" value="1"/>
</dbReference>
<dbReference type="Gene3D" id="1.10.1900.20">
    <property type="entry name" value="Ribosomal protein L20"/>
    <property type="match status" value="1"/>
</dbReference>
<dbReference type="HAMAP" id="MF_00382">
    <property type="entry name" value="Ribosomal_bL20"/>
    <property type="match status" value="1"/>
</dbReference>
<dbReference type="InterPro" id="IPR005813">
    <property type="entry name" value="Ribosomal_bL20"/>
</dbReference>
<dbReference type="InterPro" id="IPR049946">
    <property type="entry name" value="RIBOSOMAL_L20_CS"/>
</dbReference>
<dbReference type="InterPro" id="IPR035566">
    <property type="entry name" value="Ribosomal_protein_bL20_C"/>
</dbReference>
<dbReference type="NCBIfam" id="TIGR01032">
    <property type="entry name" value="rplT_bact"/>
    <property type="match status" value="1"/>
</dbReference>
<dbReference type="PANTHER" id="PTHR10986">
    <property type="entry name" value="39S RIBOSOMAL PROTEIN L20"/>
    <property type="match status" value="1"/>
</dbReference>
<dbReference type="Pfam" id="PF00453">
    <property type="entry name" value="Ribosomal_L20"/>
    <property type="match status" value="1"/>
</dbReference>
<dbReference type="PRINTS" id="PR00062">
    <property type="entry name" value="RIBOSOMALL20"/>
</dbReference>
<dbReference type="SUPFAM" id="SSF74731">
    <property type="entry name" value="Ribosomal protein L20"/>
    <property type="match status" value="1"/>
</dbReference>
<dbReference type="PROSITE" id="PS00937">
    <property type="entry name" value="RIBOSOMAL_L20"/>
    <property type="match status" value="1"/>
</dbReference>
<protein>
    <recommendedName>
        <fullName evidence="1">Large ribosomal subunit protein bL20</fullName>
    </recommendedName>
    <alternativeName>
        <fullName evidence="2">50S ribosomal protein L20</fullName>
    </alternativeName>
</protein>
<sequence length="123" mass="14507">MARVKRGVTTRARHKKVIKLAKGYRGRSKNCYRVALQRVEKALQYAYRDRRNRKRFFRSLWIMRINAAVRQYGLLYSDFIYGLSLANITLNRKILADMAVHNKDNFKQIVDLTKEALTKSRVG</sequence>
<organism>
    <name type="scientific">Ehrlichia ruminantium (strain Gardel)</name>
    <dbReference type="NCBI Taxonomy" id="302409"/>
    <lineage>
        <taxon>Bacteria</taxon>
        <taxon>Pseudomonadati</taxon>
        <taxon>Pseudomonadota</taxon>
        <taxon>Alphaproteobacteria</taxon>
        <taxon>Rickettsiales</taxon>
        <taxon>Anaplasmataceae</taxon>
        <taxon>Ehrlichia</taxon>
    </lineage>
</organism>
<feature type="chain" id="PRO_0000243680" description="Large ribosomal subunit protein bL20">
    <location>
        <begin position="1"/>
        <end position="123"/>
    </location>
</feature>
<gene>
    <name evidence="1" type="primary">rplT</name>
    <name type="ordered locus">ERGA_CDS_01290</name>
</gene>
<comment type="function">
    <text evidence="1">Binds directly to 23S ribosomal RNA and is necessary for the in vitro assembly process of the 50S ribosomal subunit. It is not involved in the protein synthesizing functions of that subunit.</text>
</comment>
<comment type="similarity">
    <text evidence="1">Belongs to the bacterial ribosomal protein bL20 family.</text>
</comment>